<evidence type="ECO:0000250" key="1"/>
<evidence type="ECO:0000255" key="2">
    <source>
        <dbReference type="HAMAP-Rule" id="MF_01057"/>
    </source>
</evidence>
<sequence>MSKTTPDRPRRNFYGRIKGKTLKPNQRTYLDEDLTPLAPGPVSWQDNPTRQPLDLNALFGGRETWLEIGFGGGEHLVHQAASNPGIGIIGAEPYINGVAMLLGKIRAAGGDNVRVHPGDVRDLFDVLPAQSISRAFLLYPDPWPKKRHHRRRFVTPEHLEPLARVLKPGAIFRVATDIPDYVRQTLEEVPRAGFEWLAERPADWRQPWGDWISTRYEQKALREGRVPHYLTFRRLEG</sequence>
<reference key="1">
    <citation type="journal article" date="2004" name="Nature">
        <title>Genome sequence of Silicibacter pomeroyi reveals adaptations to the marine environment.</title>
        <authorList>
            <person name="Moran M.A."/>
            <person name="Buchan A."/>
            <person name="Gonzalez J.M."/>
            <person name="Heidelberg J.F."/>
            <person name="Whitman W.B."/>
            <person name="Kiene R.P."/>
            <person name="Henriksen J.R."/>
            <person name="King G.M."/>
            <person name="Belas R."/>
            <person name="Fuqua C."/>
            <person name="Brinkac L.M."/>
            <person name="Lewis M."/>
            <person name="Johri S."/>
            <person name="Weaver B."/>
            <person name="Pai G."/>
            <person name="Eisen J.A."/>
            <person name="Rahe E."/>
            <person name="Sheldon W.M."/>
            <person name="Ye W."/>
            <person name="Miller T.R."/>
            <person name="Carlton J."/>
            <person name="Rasko D.A."/>
            <person name="Paulsen I.T."/>
            <person name="Ren Q."/>
            <person name="Daugherty S.C."/>
            <person name="DeBoy R.T."/>
            <person name="Dodson R.J."/>
            <person name="Durkin A.S."/>
            <person name="Madupu R."/>
            <person name="Nelson W.C."/>
            <person name="Sullivan S.A."/>
            <person name="Rosovitz M.J."/>
            <person name="Haft D.H."/>
            <person name="Selengut J."/>
            <person name="Ward N."/>
        </authorList>
    </citation>
    <scope>NUCLEOTIDE SEQUENCE [LARGE SCALE GENOMIC DNA]</scope>
    <source>
        <strain>ATCC 700808 / DSM 15171 / DSS-3</strain>
    </source>
</reference>
<reference key="2">
    <citation type="journal article" date="2014" name="Stand. Genomic Sci.">
        <title>An updated genome annotation for the model marine bacterium Ruegeria pomeroyi DSS-3.</title>
        <authorList>
            <person name="Rivers A.R."/>
            <person name="Smith C.B."/>
            <person name="Moran M.A."/>
        </authorList>
    </citation>
    <scope>GENOME REANNOTATION</scope>
    <source>
        <strain>ATCC 700808 / DSM 15171 / DSS-3</strain>
    </source>
</reference>
<dbReference type="EC" id="2.1.1.33" evidence="2"/>
<dbReference type="EMBL" id="CP000032">
    <property type="protein sequence ID" value="AAV97155.1"/>
    <property type="molecule type" value="Genomic_DNA"/>
</dbReference>
<dbReference type="RefSeq" id="WP_011241799.1">
    <property type="nucleotide sequence ID" value="NC_006569.1"/>
</dbReference>
<dbReference type="SMR" id="Q5LLK8"/>
<dbReference type="PaxDb" id="246200-SPOA0014"/>
<dbReference type="KEGG" id="sil:SPOA0014"/>
<dbReference type="eggNOG" id="COG0220">
    <property type="taxonomic scope" value="Bacteria"/>
</dbReference>
<dbReference type="HOGENOM" id="CLU_050910_0_3_5"/>
<dbReference type="OrthoDB" id="9802090at2"/>
<dbReference type="UniPathway" id="UPA00989"/>
<dbReference type="Proteomes" id="UP000001023">
    <property type="component" value="Plasmid megaplasmid"/>
</dbReference>
<dbReference type="GO" id="GO:0043527">
    <property type="term" value="C:tRNA methyltransferase complex"/>
    <property type="evidence" value="ECO:0007669"/>
    <property type="project" value="TreeGrafter"/>
</dbReference>
<dbReference type="GO" id="GO:0008176">
    <property type="term" value="F:tRNA (guanine(46)-N7)-methyltransferase activity"/>
    <property type="evidence" value="ECO:0007669"/>
    <property type="project" value="UniProtKB-UniRule"/>
</dbReference>
<dbReference type="CDD" id="cd02440">
    <property type="entry name" value="AdoMet_MTases"/>
    <property type="match status" value="1"/>
</dbReference>
<dbReference type="Gene3D" id="3.40.50.150">
    <property type="entry name" value="Vaccinia Virus protein VP39"/>
    <property type="match status" value="1"/>
</dbReference>
<dbReference type="HAMAP" id="MF_01057">
    <property type="entry name" value="tRNA_methyltr_TrmB"/>
    <property type="match status" value="1"/>
</dbReference>
<dbReference type="InterPro" id="IPR029063">
    <property type="entry name" value="SAM-dependent_MTases_sf"/>
</dbReference>
<dbReference type="InterPro" id="IPR003358">
    <property type="entry name" value="tRNA_(Gua-N-7)_MeTrfase_Trmb"/>
</dbReference>
<dbReference type="InterPro" id="IPR055361">
    <property type="entry name" value="tRNA_methyltr_TrmB_bact"/>
</dbReference>
<dbReference type="PANTHER" id="PTHR23417">
    <property type="entry name" value="3-DEOXY-D-MANNO-OCTULOSONIC-ACID TRANSFERASE/TRNA GUANINE-N 7 - -METHYLTRANSFERASE"/>
    <property type="match status" value="1"/>
</dbReference>
<dbReference type="PANTHER" id="PTHR23417:SF14">
    <property type="entry name" value="PENTACOTRIPEPTIDE-REPEAT REGION OF PRORP DOMAIN-CONTAINING PROTEIN"/>
    <property type="match status" value="1"/>
</dbReference>
<dbReference type="Pfam" id="PF02390">
    <property type="entry name" value="Methyltransf_4"/>
    <property type="match status" value="1"/>
</dbReference>
<dbReference type="SUPFAM" id="SSF53335">
    <property type="entry name" value="S-adenosyl-L-methionine-dependent methyltransferases"/>
    <property type="match status" value="1"/>
</dbReference>
<dbReference type="PROSITE" id="PS51625">
    <property type="entry name" value="SAM_MT_TRMB"/>
    <property type="match status" value="1"/>
</dbReference>
<gene>
    <name evidence="2" type="primary">trmB</name>
    <name type="ordered locus">SPOA0014</name>
</gene>
<name>TRMB_RUEPO</name>
<protein>
    <recommendedName>
        <fullName evidence="2">tRNA (guanine-N(7)-)-methyltransferase</fullName>
        <ecNumber evidence="2">2.1.1.33</ecNumber>
    </recommendedName>
    <alternativeName>
        <fullName evidence="2">tRNA (guanine(46)-N(7))-methyltransferase</fullName>
    </alternativeName>
    <alternativeName>
        <fullName evidence="2">tRNA(m7G46)-methyltransferase</fullName>
    </alternativeName>
</protein>
<proteinExistence type="inferred from homology"/>
<accession>Q5LLK8</accession>
<keyword id="KW-0489">Methyltransferase</keyword>
<keyword id="KW-0614">Plasmid</keyword>
<keyword id="KW-1185">Reference proteome</keyword>
<keyword id="KW-0949">S-adenosyl-L-methionine</keyword>
<keyword id="KW-0808">Transferase</keyword>
<keyword id="KW-0819">tRNA processing</keyword>
<geneLocation type="plasmid">
    <name>megaplasmid Spo</name>
</geneLocation>
<organism>
    <name type="scientific">Ruegeria pomeroyi (strain ATCC 700808 / DSM 15171 / DSS-3)</name>
    <name type="common">Silicibacter pomeroyi</name>
    <dbReference type="NCBI Taxonomy" id="246200"/>
    <lineage>
        <taxon>Bacteria</taxon>
        <taxon>Pseudomonadati</taxon>
        <taxon>Pseudomonadota</taxon>
        <taxon>Alphaproteobacteria</taxon>
        <taxon>Rhodobacterales</taxon>
        <taxon>Roseobacteraceae</taxon>
        <taxon>Ruegeria</taxon>
    </lineage>
</organism>
<comment type="function">
    <text evidence="2">Catalyzes the formation of N(7)-methylguanine at position 46 (m7G46) in tRNA.</text>
</comment>
<comment type="catalytic activity">
    <reaction evidence="2">
        <text>guanosine(46) in tRNA + S-adenosyl-L-methionine = N(7)-methylguanosine(46) in tRNA + S-adenosyl-L-homocysteine</text>
        <dbReference type="Rhea" id="RHEA:42708"/>
        <dbReference type="Rhea" id="RHEA-COMP:10188"/>
        <dbReference type="Rhea" id="RHEA-COMP:10189"/>
        <dbReference type="ChEBI" id="CHEBI:57856"/>
        <dbReference type="ChEBI" id="CHEBI:59789"/>
        <dbReference type="ChEBI" id="CHEBI:74269"/>
        <dbReference type="ChEBI" id="CHEBI:74480"/>
        <dbReference type="EC" id="2.1.1.33"/>
    </reaction>
</comment>
<comment type="pathway">
    <text evidence="2">tRNA modification; N(7)-methylguanine-tRNA biosynthesis.</text>
</comment>
<comment type="similarity">
    <text evidence="2">Belongs to the class I-like SAM-binding methyltransferase superfamily. TrmB family.</text>
</comment>
<feature type="chain" id="PRO_0000229198" description="tRNA (guanine-N(7)-)-methyltransferase">
    <location>
        <begin position="1"/>
        <end position="237"/>
    </location>
</feature>
<feature type="active site" evidence="1">
    <location>
        <position position="141"/>
    </location>
</feature>
<feature type="binding site" evidence="2">
    <location>
        <position position="67"/>
    </location>
    <ligand>
        <name>S-adenosyl-L-methionine</name>
        <dbReference type="ChEBI" id="CHEBI:59789"/>
    </ligand>
</feature>
<feature type="binding site" evidence="2">
    <location>
        <position position="92"/>
    </location>
    <ligand>
        <name>S-adenosyl-L-methionine</name>
        <dbReference type="ChEBI" id="CHEBI:59789"/>
    </ligand>
</feature>
<feature type="binding site" evidence="2">
    <location>
        <position position="119"/>
    </location>
    <ligand>
        <name>S-adenosyl-L-methionine</name>
        <dbReference type="ChEBI" id="CHEBI:59789"/>
    </ligand>
</feature>
<feature type="binding site" evidence="2">
    <location>
        <position position="141"/>
    </location>
    <ligand>
        <name>S-adenosyl-L-methionine</name>
        <dbReference type="ChEBI" id="CHEBI:59789"/>
    </ligand>
</feature>
<feature type="binding site" evidence="2">
    <location>
        <position position="145"/>
    </location>
    <ligand>
        <name>substrate</name>
    </ligand>
</feature>
<feature type="binding site" evidence="2">
    <location>
        <position position="177"/>
    </location>
    <ligand>
        <name>substrate</name>
    </ligand>
</feature>
<feature type="binding site" evidence="2">
    <location>
        <begin position="214"/>
        <end position="217"/>
    </location>
    <ligand>
        <name>substrate</name>
    </ligand>
</feature>